<organism>
    <name type="scientific">Pyrococcus abyssi (strain GE5 / Orsay)</name>
    <dbReference type="NCBI Taxonomy" id="272844"/>
    <lineage>
        <taxon>Archaea</taxon>
        <taxon>Methanobacteriati</taxon>
        <taxon>Methanobacteriota</taxon>
        <taxon>Thermococci</taxon>
        <taxon>Thermococcales</taxon>
        <taxon>Thermococcaceae</taxon>
        <taxon>Pyrococcus</taxon>
    </lineage>
</organism>
<dbReference type="EC" id="5.3.1.1" evidence="1"/>
<dbReference type="EMBL" id="AJ248288">
    <property type="protein sequence ID" value="CAB50641.1"/>
    <property type="molecule type" value="Genomic_DNA"/>
</dbReference>
<dbReference type="EMBL" id="HE613800">
    <property type="protein sequence ID" value="CCE71209.1"/>
    <property type="molecule type" value="Genomic_DNA"/>
</dbReference>
<dbReference type="PIR" id="C75025">
    <property type="entry name" value="C75025"/>
</dbReference>
<dbReference type="RefSeq" id="WP_010868855.1">
    <property type="nucleotide sequence ID" value="NC_000868.1"/>
</dbReference>
<dbReference type="SMR" id="Q9UXX2"/>
<dbReference type="STRING" id="272844.PAB1208"/>
<dbReference type="KEGG" id="pab:PAB1208"/>
<dbReference type="PATRIC" id="fig|272844.11.peg.1854"/>
<dbReference type="eggNOG" id="arCOG01087">
    <property type="taxonomic scope" value="Archaea"/>
</dbReference>
<dbReference type="HOGENOM" id="CLU_104921_0_0_2"/>
<dbReference type="OrthoDB" id="9465at2157"/>
<dbReference type="PhylomeDB" id="Q9UXX2"/>
<dbReference type="UniPathway" id="UPA00109">
    <property type="reaction ID" value="UER00189"/>
</dbReference>
<dbReference type="UniPathway" id="UPA00138"/>
<dbReference type="Proteomes" id="UP000000810">
    <property type="component" value="Chromosome"/>
</dbReference>
<dbReference type="Proteomes" id="UP000009139">
    <property type="component" value="Chromosome"/>
</dbReference>
<dbReference type="GO" id="GO:0005829">
    <property type="term" value="C:cytosol"/>
    <property type="evidence" value="ECO:0007669"/>
    <property type="project" value="TreeGrafter"/>
</dbReference>
<dbReference type="GO" id="GO:0004807">
    <property type="term" value="F:triose-phosphate isomerase activity"/>
    <property type="evidence" value="ECO:0007669"/>
    <property type="project" value="UniProtKB-UniRule"/>
</dbReference>
<dbReference type="GO" id="GO:0006094">
    <property type="term" value="P:gluconeogenesis"/>
    <property type="evidence" value="ECO:0007669"/>
    <property type="project" value="UniProtKB-UniRule"/>
</dbReference>
<dbReference type="GO" id="GO:0046166">
    <property type="term" value="P:glyceraldehyde-3-phosphate biosynthetic process"/>
    <property type="evidence" value="ECO:0007669"/>
    <property type="project" value="TreeGrafter"/>
</dbReference>
<dbReference type="GO" id="GO:0019563">
    <property type="term" value="P:glycerol catabolic process"/>
    <property type="evidence" value="ECO:0007669"/>
    <property type="project" value="TreeGrafter"/>
</dbReference>
<dbReference type="GO" id="GO:0006096">
    <property type="term" value="P:glycolytic process"/>
    <property type="evidence" value="ECO:0007669"/>
    <property type="project" value="UniProtKB-UniRule"/>
</dbReference>
<dbReference type="CDD" id="cd00311">
    <property type="entry name" value="TIM"/>
    <property type="match status" value="1"/>
</dbReference>
<dbReference type="FunFam" id="3.20.20.70:FF:000223">
    <property type="entry name" value="Triosephosphate isomerase"/>
    <property type="match status" value="1"/>
</dbReference>
<dbReference type="Gene3D" id="3.20.20.70">
    <property type="entry name" value="Aldolase class I"/>
    <property type="match status" value="1"/>
</dbReference>
<dbReference type="HAMAP" id="MF_00147_A">
    <property type="entry name" value="TIM_A"/>
    <property type="match status" value="1"/>
</dbReference>
<dbReference type="InterPro" id="IPR013785">
    <property type="entry name" value="Aldolase_TIM"/>
</dbReference>
<dbReference type="InterPro" id="IPR035990">
    <property type="entry name" value="TIM_sf"/>
</dbReference>
<dbReference type="InterPro" id="IPR000652">
    <property type="entry name" value="Triosephosphate_isomerase"/>
</dbReference>
<dbReference type="InterPro" id="IPR022891">
    <property type="entry name" value="Triosephosphate_isomerase_arc"/>
</dbReference>
<dbReference type="InterPro" id="IPR020861">
    <property type="entry name" value="Triosephosphate_isomerase_AS"/>
</dbReference>
<dbReference type="NCBIfam" id="NF003302">
    <property type="entry name" value="PRK04302.1"/>
    <property type="match status" value="1"/>
</dbReference>
<dbReference type="NCBIfam" id="TIGR00419">
    <property type="entry name" value="tim"/>
    <property type="match status" value="1"/>
</dbReference>
<dbReference type="PANTHER" id="PTHR21139">
    <property type="entry name" value="TRIOSEPHOSPHATE ISOMERASE"/>
    <property type="match status" value="1"/>
</dbReference>
<dbReference type="PANTHER" id="PTHR21139:SF42">
    <property type="entry name" value="TRIOSEPHOSPHATE ISOMERASE"/>
    <property type="match status" value="1"/>
</dbReference>
<dbReference type="Pfam" id="PF00121">
    <property type="entry name" value="TIM"/>
    <property type="match status" value="1"/>
</dbReference>
<dbReference type="SUPFAM" id="SSF51351">
    <property type="entry name" value="Triosephosphate isomerase (TIM)"/>
    <property type="match status" value="1"/>
</dbReference>
<dbReference type="PROSITE" id="PS00171">
    <property type="entry name" value="TIM_1"/>
    <property type="match status" value="1"/>
</dbReference>
<dbReference type="PROSITE" id="PS51440">
    <property type="entry name" value="TIM_2"/>
    <property type="match status" value="1"/>
</dbReference>
<reference key="1">
    <citation type="journal article" date="2003" name="Mol. Microbiol.">
        <title>An integrated analysis of the genome of the hyperthermophilic archaeon Pyrococcus abyssi.</title>
        <authorList>
            <person name="Cohen G.N."/>
            <person name="Barbe V."/>
            <person name="Flament D."/>
            <person name="Galperin M."/>
            <person name="Heilig R."/>
            <person name="Lecompte O."/>
            <person name="Poch O."/>
            <person name="Prieur D."/>
            <person name="Querellou J."/>
            <person name="Ripp R."/>
            <person name="Thierry J.-C."/>
            <person name="Van der Oost J."/>
            <person name="Weissenbach J."/>
            <person name="Zivanovic Y."/>
            <person name="Forterre P."/>
        </authorList>
    </citation>
    <scope>NUCLEOTIDE SEQUENCE [LARGE SCALE GENOMIC DNA]</scope>
    <source>
        <strain>GE5 / Orsay</strain>
    </source>
</reference>
<reference key="2">
    <citation type="journal article" date="2012" name="Curr. Microbiol.">
        <title>Re-annotation of two hyperthermophilic archaea Pyrococcus abyssi GE5 and Pyrococcus furiosus DSM 3638.</title>
        <authorList>
            <person name="Gao J."/>
            <person name="Wang J."/>
        </authorList>
    </citation>
    <scope>GENOME REANNOTATION</scope>
    <source>
        <strain>GE5 / Orsay</strain>
    </source>
</reference>
<feature type="chain" id="PRO_0000090339" description="Triosephosphate isomerase">
    <location>
        <begin position="1"/>
        <end position="228"/>
    </location>
</feature>
<feature type="active site" description="Electrophile" evidence="1">
    <location>
        <position position="95"/>
    </location>
</feature>
<feature type="active site" description="Proton acceptor" evidence="1">
    <location>
        <position position="143"/>
    </location>
</feature>
<feature type="binding site" evidence="1">
    <location>
        <begin position="11"/>
        <end position="13"/>
    </location>
    <ligand>
        <name>substrate</name>
    </ligand>
</feature>
<feature type="binding site" evidence="1">
    <location>
        <position position="148"/>
    </location>
    <ligand>
        <name>substrate</name>
    </ligand>
</feature>
<feature type="binding site" evidence="1">
    <location>
        <position position="183"/>
    </location>
    <ligand>
        <name>substrate</name>
    </ligand>
</feature>
<feature type="binding site" evidence="1">
    <location>
        <begin position="204"/>
        <end position="205"/>
    </location>
    <ligand>
        <name>substrate</name>
    </ligand>
</feature>
<accession>Q9UXX2</accession>
<accession>G8ZKA2</accession>
<name>TPIS_PYRAB</name>
<proteinExistence type="inferred from homology"/>
<protein>
    <recommendedName>
        <fullName evidence="1">Triosephosphate isomerase</fullName>
        <shortName evidence="1">TIM</shortName>
        <shortName evidence="1">TPI</shortName>
        <ecNumber evidence="1">5.3.1.1</ecNumber>
    </recommendedName>
    <alternativeName>
        <fullName evidence="1">Triose-phosphate isomerase</fullName>
    </alternativeName>
</protein>
<gene>
    <name evidence="1" type="primary">tpiA</name>
    <name type="ordered locus">PYRAB17360</name>
    <name type="ORF">PAB1208</name>
</gene>
<evidence type="ECO:0000255" key="1">
    <source>
        <dbReference type="HAMAP-Rule" id="MF_00147"/>
    </source>
</evidence>
<comment type="function">
    <text evidence="1">Involved in the gluconeogenesis. Catalyzes stereospecifically the conversion of dihydroxyacetone phosphate (DHAP) to D-glyceraldehyde-3-phosphate (G3P).</text>
</comment>
<comment type="catalytic activity">
    <reaction evidence="1">
        <text>D-glyceraldehyde 3-phosphate = dihydroxyacetone phosphate</text>
        <dbReference type="Rhea" id="RHEA:18585"/>
        <dbReference type="ChEBI" id="CHEBI:57642"/>
        <dbReference type="ChEBI" id="CHEBI:59776"/>
        <dbReference type="EC" id="5.3.1.1"/>
    </reaction>
</comment>
<comment type="pathway">
    <text evidence="1">Carbohydrate biosynthesis; gluconeogenesis.</text>
</comment>
<comment type="pathway">
    <text evidence="1">Carbohydrate degradation; glycolysis; D-glyceraldehyde 3-phosphate from glycerone phosphate: step 1/1.</text>
</comment>
<comment type="subunit">
    <text evidence="1">Homotetramer; dimer of dimers.</text>
</comment>
<comment type="subcellular location">
    <subcellularLocation>
        <location evidence="1">Cytoplasm</location>
    </subcellularLocation>
</comment>
<comment type="similarity">
    <text evidence="1">Belongs to the triosephosphate isomerase family.</text>
</comment>
<sequence length="228" mass="24113">MELKEPIIAINFKTYIEATGKRALEIAKAAERVWKDTGVTIVVAPQLVDLRMIAENVEIPVFAQHIDPIKPGSHTGHVLPEAVKEAGAVGTLLNHSENRMILADLEAAISRAKEVGLITMVCSNNPAVSAAVAALDPDYVAVEPPELIGTGIPVSKAKPEVITDTVELVRKVNPKVKVLCGAGISTGEDVKKAIELGTVGVLLASGVTKAKDPEKAIRDLVSGIIRKD</sequence>
<keyword id="KW-0963">Cytoplasm</keyword>
<keyword id="KW-0312">Gluconeogenesis</keyword>
<keyword id="KW-0324">Glycolysis</keyword>
<keyword id="KW-0413">Isomerase</keyword>